<feature type="chain" id="PRO_0000238620" description="Kinectin">
    <location>
        <begin position="1"/>
        <end position="1327"/>
    </location>
</feature>
<feature type="topological domain" description="Cytoplasmic" evidence="3">
    <location>
        <begin position="1"/>
        <end position="8"/>
    </location>
</feature>
<feature type="transmembrane region" description="Helical; Signal-anchor for type II membrane protein" evidence="3">
    <location>
        <begin position="9"/>
        <end position="29"/>
    </location>
</feature>
<feature type="topological domain" description="Lumenal" evidence="3">
    <location>
        <begin position="30"/>
        <end position="1327"/>
    </location>
</feature>
<feature type="region of interest" description="Disordered" evidence="4">
    <location>
        <begin position="49"/>
        <end position="181"/>
    </location>
</feature>
<feature type="region of interest" description="Disordered" evidence="4">
    <location>
        <begin position="197"/>
        <end position="216"/>
    </location>
</feature>
<feature type="coiled-coil region" evidence="3">
    <location>
        <begin position="329"/>
        <end position="1327"/>
    </location>
</feature>
<feature type="compositionally biased region" description="Basic and acidic residues" evidence="4">
    <location>
        <begin position="73"/>
        <end position="86"/>
    </location>
</feature>
<feature type="compositionally biased region" description="Basic and acidic residues" evidence="4">
    <location>
        <begin position="111"/>
        <end position="135"/>
    </location>
</feature>
<feature type="compositionally biased region" description="Basic residues" evidence="4">
    <location>
        <begin position="163"/>
        <end position="173"/>
    </location>
</feature>
<feature type="modified residue" description="Phosphoserine" evidence="2">
    <location>
        <position position="75"/>
    </location>
</feature>
<feature type="modified residue" description="Phosphoserine" evidence="2">
    <location>
        <position position="77"/>
    </location>
</feature>
<feature type="modified residue" description="Phosphoserine" evidence="2">
    <location>
        <position position="1060"/>
    </location>
</feature>
<feature type="modified residue" description="Phosphoserine" evidence="2">
    <location>
        <position position="1290"/>
    </location>
</feature>
<feature type="glycosylation site" description="N-linked (GlcNAc...) asparagine" evidence="3">
    <location>
        <position position="69"/>
    </location>
</feature>
<feature type="glycosylation site" description="N-linked (GlcNAc...) asparagine" evidence="3">
    <location>
        <position position="1031"/>
    </location>
</feature>
<feature type="glycosylation site" description="N-linked (GlcNAc...) asparagine" evidence="3">
    <location>
        <position position="1066"/>
    </location>
</feature>
<feature type="splice variant" id="VSP_052042" description="In isoform 2, isoform 3, isoform 4, isoform 7, isoform 8, isoform 10, isoform 11, isoform 12, isoform 13, isoform 14 and isoform 16." evidence="7">
    <location>
        <begin position="836"/>
        <end position="858"/>
    </location>
</feature>
<feature type="splice variant" id="VSP_052043" description="In isoform 2, isoform 3, isoform 4, isoform 5, isoform 6, isoform 10, isoform 12 and isoform 16." evidence="7">
    <location>
        <begin position="1007"/>
        <end position="1035"/>
    </location>
</feature>
<feature type="splice variant" id="VSP_052044" description="In isoform 2, isoform 3, isoform 7, isoform 8, isoform 9, isoform 12, isoform 14 and isoform 15." evidence="7">
    <location>
        <begin position="1154"/>
        <end position="1177"/>
    </location>
</feature>
<feature type="splice variant" id="VSP_052045" description="In isoform 2, isoform 4, isoform 6, isoform 8, isoform 9, isoform 12, isoform 13, isoform 14, isoform 15 and isoform 16." evidence="7">
    <location>
        <begin position="1208"/>
        <end position="1235"/>
    </location>
</feature>
<feature type="splice variant" id="VSP_052046" description="In isoform 2, isoform 3, isoform 5, isoform 6, isoform 9, isoform 13, isoform 14 and isoform 16." evidence="7">
    <original>ESPEKETMSVSLNQTVTQLQQLLQEVNQQLTKET</original>
    <variation>SEVIGKLLVRS</variation>
    <location>
        <begin position="1294"/>
        <end position="1327"/>
    </location>
</feature>
<feature type="sequence conflict" description="In Ref. 2; BAC30538." evidence="8" ref="2">
    <original>I</original>
    <variation>V</variation>
    <location>
        <position position="10"/>
    </location>
</feature>
<feature type="sequence conflict" description="In Ref. 2; BAC30538." evidence="8" ref="2">
    <original>Q</original>
    <variation>K</variation>
    <location>
        <position position="115"/>
    </location>
</feature>
<feature type="sequence conflict" description="In Ref. 2." evidence="8" ref="2">
    <location>
        <position position="178"/>
    </location>
</feature>
<feature type="sequence conflict" description="In Ref. 2." evidence="8" ref="2">
    <original>M</original>
    <variation>I</variation>
    <location>
        <position position="238"/>
    </location>
</feature>
<feature type="sequence conflict" description="In Ref. 2." evidence="8" ref="2">
    <original>R</original>
    <variation>Q</variation>
    <location>
        <position position="360"/>
    </location>
</feature>
<feature type="sequence conflict" description="In Ref. 3; CAD56927." evidence="8" ref="3">
    <original>V</original>
    <variation>VS</variation>
    <location>
        <position position="1118"/>
    </location>
</feature>
<feature type="sequence conflict" description="In Ref. 3; CAD56935." evidence="8" ref="3">
    <original>E</original>
    <variation>G</variation>
    <location>
        <position position="1183"/>
    </location>
</feature>
<feature type="sequence conflict" description="In Ref. 3; CAD56936." evidence="8" ref="3">
    <original>L</original>
    <variation>F</variation>
    <location>
        <position position="1238"/>
    </location>
</feature>
<dbReference type="EMBL" id="L43326">
    <property type="protein sequence ID" value="AAB65839.1"/>
    <property type="molecule type" value="mRNA"/>
</dbReference>
<dbReference type="EMBL" id="AK040200">
    <property type="protein sequence ID" value="BAC30538.1"/>
    <property type="molecule type" value="mRNA"/>
</dbReference>
<dbReference type="EMBL" id="AJ517365">
    <property type="protein sequence ID" value="CAD56924.1"/>
    <property type="molecule type" value="mRNA"/>
</dbReference>
<dbReference type="EMBL" id="AJ517366">
    <property type="protein sequence ID" value="CAD56925.1"/>
    <property type="molecule type" value="mRNA"/>
</dbReference>
<dbReference type="EMBL" id="AJ517367">
    <property type="protein sequence ID" value="CAD56926.1"/>
    <property type="molecule type" value="mRNA"/>
</dbReference>
<dbReference type="EMBL" id="AJ517368">
    <property type="protein sequence ID" value="CAD56927.1"/>
    <property type="molecule type" value="mRNA"/>
</dbReference>
<dbReference type="EMBL" id="AJ517369">
    <property type="protein sequence ID" value="CAD56928.1"/>
    <property type="molecule type" value="mRNA"/>
</dbReference>
<dbReference type="EMBL" id="AJ517370">
    <property type="protein sequence ID" value="CAD56929.1"/>
    <property type="molecule type" value="mRNA"/>
</dbReference>
<dbReference type="EMBL" id="AJ517371">
    <property type="protein sequence ID" value="CAD56930.1"/>
    <property type="molecule type" value="mRNA"/>
</dbReference>
<dbReference type="EMBL" id="AJ517372">
    <property type="protein sequence ID" value="CAD56931.1"/>
    <property type="molecule type" value="mRNA"/>
</dbReference>
<dbReference type="EMBL" id="AJ517373">
    <property type="protein sequence ID" value="CAD56932.1"/>
    <property type="molecule type" value="mRNA"/>
</dbReference>
<dbReference type="EMBL" id="AJ517374">
    <property type="protein sequence ID" value="CAD56933.1"/>
    <property type="molecule type" value="mRNA"/>
</dbReference>
<dbReference type="EMBL" id="AJ517375">
    <property type="protein sequence ID" value="CAD56934.1"/>
    <property type="molecule type" value="mRNA"/>
</dbReference>
<dbReference type="EMBL" id="AJ517376">
    <property type="protein sequence ID" value="CAD56935.1"/>
    <property type="molecule type" value="mRNA"/>
</dbReference>
<dbReference type="EMBL" id="AJ517377">
    <property type="protein sequence ID" value="CAD56936.1"/>
    <property type="molecule type" value="mRNA"/>
</dbReference>
<dbReference type="EMBL" id="AJ517378">
    <property type="protein sequence ID" value="CAD56937.1"/>
    <property type="molecule type" value="mRNA"/>
</dbReference>
<dbReference type="EMBL" id="AJ517379">
    <property type="protein sequence ID" value="CAD56938.1"/>
    <property type="molecule type" value="mRNA"/>
</dbReference>
<dbReference type="EMBL" id="AJ517380">
    <property type="protein sequence ID" value="CAD56939.1"/>
    <property type="molecule type" value="mRNA"/>
</dbReference>
<dbReference type="EMBL" id="AJ517381">
    <property type="protein sequence ID" value="CAD56940.1"/>
    <property type="molecule type" value="mRNA"/>
</dbReference>
<dbReference type="EMBL" id="AJ517382">
    <property type="protein sequence ID" value="CAD56941.1"/>
    <property type="molecule type" value="mRNA"/>
</dbReference>
<dbReference type="EMBL" id="AJ517383">
    <property type="protein sequence ID" value="CAD56942.1"/>
    <property type="molecule type" value="mRNA"/>
</dbReference>
<dbReference type="EMBL" id="AJ517384">
    <property type="protein sequence ID" value="CAD56943.1"/>
    <property type="molecule type" value="mRNA"/>
</dbReference>
<dbReference type="CCDS" id="CCDS36900.1">
    <molecule id="Q61595-1"/>
</dbReference>
<dbReference type="CCDS" id="CCDS84123.1">
    <molecule id="Q61595-9"/>
</dbReference>
<dbReference type="CCDS" id="CCDS84124.1">
    <molecule id="Q61595-5"/>
</dbReference>
<dbReference type="CCDS" id="CCDS84125.1">
    <molecule id="Q61595-6"/>
</dbReference>
<dbReference type="CCDS" id="CCDS84126.1">
    <molecule id="Q61595-11"/>
</dbReference>
<dbReference type="CCDS" id="CCDS84127.1">
    <molecule id="Q61595-13"/>
</dbReference>
<dbReference type="CCDS" id="CCDS84130.1">
    <molecule id="Q61595-14"/>
</dbReference>
<dbReference type="CCDS" id="CCDS84132.1">
    <molecule id="Q61595-4"/>
</dbReference>
<dbReference type="CCDS" id="CCDS84133.1">
    <molecule id="Q61595-16"/>
</dbReference>
<dbReference type="CCDS" id="CCDS84135.1">
    <molecule id="Q61595-12"/>
</dbReference>
<dbReference type="CCDS" id="CCDS84136.1">
    <molecule id="Q61595-2"/>
</dbReference>
<dbReference type="RefSeq" id="NP_001280564.1">
    <property type="nucleotide sequence ID" value="NM_001293635.1"/>
</dbReference>
<dbReference type="RefSeq" id="NP_001280565.1">
    <property type="nucleotide sequence ID" value="NM_001293636.1"/>
</dbReference>
<dbReference type="RefSeq" id="NP_001334448.1">
    <property type="nucleotide sequence ID" value="NM_001347519.1"/>
</dbReference>
<dbReference type="RefSeq" id="NP_001334449.1">
    <property type="nucleotide sequence ID" value="NM_001347520.1"/>
</dbReference>
<dbReference type="RefSeq" id="NP_001334450.1">
    <property type="nucleotide sequence ID" value="NM_001347521.1"/>
</dbReference>
<dbReference type="RefSeq" id="NP_001334452.1">
    <property type="nucleotide sequence ID" value="NM_001347523.1"/>
</dbReference>
<dbReference type="RefSeq" id="NP_001334453.1">
    <property type="nucleotide sequence ID" value="NM_001347524.1"/>
</dbReference>
<dbReference type="RefSeq" id="NP_001334454.1">
    <property type="nucleotide sequence ID" value="NM_001347525.1"/>
</dbReference>
<dbReference type="RefSeq" id="NP_001334455.1">
    <property type="nucleotide sequence ID" value="NM_001347526.1"/>
</dbReference>
<dbReference type="RefSeq" id="NP_001334456.1">
    <property type="nucleotide sequence ID" value="NM_001347527.1"/>
</dbReference>
<dbReference type="RefSeq" id="NP_001334457.1">
    <property type="nucleotide sequence ID" value="NM_001347528.1"/>
</dbReference>
<dbReference type="RefSeq" id="NP_032503.2">
    <property type="nucleotide sequence ID" value="NM_008477.2"/>
</dbReference>
<dbReference type="SMR" id="Q61595"/>
<dbReference type="BioGRID" id="201049">
    <property type="interactions" value="95"/>
</dbReference>
<dbReference type="FunCoup" id="Q61595">
    <property type="interactions" value="1444"/>
</dbReference>
<dbReference type="IntAct" id="Q61595">
    <property type="interactions" value="7"/>
</dbReference>
<dbReference type="MINT" id="Q61595"/>
<dbReference type="STRING" id="10090.ENSMUSP00000140324"/>
<dbReference type="ChEMBL" id="CHEMBL4879473"/>
<dbReference type="GlyCosmos" id="Q61595">
    <property type="glycosylation" value="3 sites, No reported glycans"/>
</dbReference>
<dbReference type="GlyGen" id="Q61595">
    <property type="glycosylation" value="5 sites, 2 N-linked glycans (1 site), 1 O-linked glycan (2 sites)"/>
</dbReference>
<dbReference type="iPTMnet" id="Q61595"/>
<dbReference type="PhosphoSitePlus" id="Q61595"/>
<dbReference type="SwissPalm" id="Q61595"/>
<dbReference type="jPOST" id="Q61595"/>
<dbReference type="PaxDb" id="10090-ENSMUSP00000140324"/>
<dbReference type="PeptideAtlas" id="Q61595"/>
<dbReference type="ProteomicsDB" id="264882">
    <molecule id="Q61595-1"/>
</dbReference>
<dbReference type="ProteomicsDB" id="264883">
    <molecule id="Q61595-2"/>
</dbReference>
<dbReference type="ProteomicsDB" id="264884">
    <molecule id="Q61595-3"/>
</dbReference>
<dbReference type="ProteomicsDB" id="264885">
    <molecule id="Q61595-4"/>
</dbReference>
<dbReference type="ProteomicsDB" id="264886">
    <molecule id="Q61595-5"/>
</dbReference>
<dbReference type="ProteomicsDB" id="264887">
    <molecule id="Q61595-6"/>
</dbReference>
<dbReference type="ProteomicsDB" id="264888">
    <molecule id="Q61595-7"/>
</dbReference>
<dbReference type="ProteomicsDB" id="264889">
    <molecule id="Q61595-8"/>
</dbReference>
<dbReference type="ProteomicsDB" id="264890">
    <molecule id="Q61595-9"/>
</dbReference>
<dbReference type="ProteomicsDB" id="264891">
    <molecule id="Q61595-10"/>
</dbReference>
<dbReference type="ProteomicsDB" id="264892">
    <molecule id="Q61595-11"/>
</dbReference>
<dbReference type="ProteomicsDB" id="264893">
    <molecule id="Q61595-12"/>
</dbReference>
<dbReference type="ProteomicsDB" id="264894">
    <molecule id="Q61595-13"/>
</dbReference>
<dbReference type="ProteomicsDB" id="264895">
    <molecule id="Q61595-14"/>
</dbReference>
<dbReference type="ProteomicsDB" id="264896">
    <molecule id="Q61595-15"/>
</dbReference>
<dbReference type="ProteomicsDB" id="264897">
    <molecule id="Q61595-16"/>
</dbReference>
<dbReference type="Pumba" id="Q61595"/>
<dbReference type="DNASU" id="16709"/>
<dbReference type="GeneID" id="16709"/>
<dbReference type="KEGG" id="mmu:16709"/>
<dbReference type="AGR" id="MGI:109153"/>
<dbReference type="CTD" id="3895"/>
<dbReference type="MGI" id="MGI:109153">
    <property type="gene designation" value="Ktn1"/>
</dbReference>
<dbReference type="eggNOG" id="ENOG502QSIW">
    <property type="taxonomic scope" value="Eukaryota"/>
</dbReference>
<dbReference type="InParanoid" id="Q61595"/>
<dbReference type="OrthoDB" id="5875463at2759"/>
<dbReference type="PhylomeDB" id="Q61595"/>
<dbReference type="Reactome" id="R-MMU-381426">
    <property type="pathway name" value="Regulation of Insulin-like Growth Factor (IGF) transport and uptake by Insulin-like Growth Factor Binding Proteins (IGFBPs)"/>
</dbReference>
<dbReference type="Reactome" id="R-MMU-5625970">
    <property type="pathway name" value="RHO GTPases activate KTN1"/>
</dbReference>
<dbReference type="Reactome" id="R-MMU-8957275">
    <property type="pathway name" value="Post-translational protein phosphorylation"/>
</dbReference>
<dbReference type="Reactome" id="R-MMU-8980692">
    <property type="pathway name" value="RHOA GTPase cycle"/>
</dbReference>
<dbReference type="Reactome" id="R-MMU-9013148">
    <property type="pathway name" value="CDC42 GTPase cycle"/>
</dbReference>
<dbReference type="Reactome" id="R-MMU-9013149">
    <property type="pathway name" value="RAC1 GTPase cycle"/>
</dbReference>
<dbReference type="Reactome" id="R-MMU-9013408">
    <property type="pathway name" value="RHOG GTPase cycle"/>
</dbReference>
<dbReference type="Reactome" id="R-MMU-9696264">
    <property type="pathway name" value="RND3 GTPase cycle"/>
</dbReference>
<dbReference type="Reactome" id="R-MMU-9696270">
    <property type="pathway name" value="RND2 GTPase cycle"/>
</dbReference>
<dbReference type="BioGRID-ORCS" id="16709">
    <property type="hits" value="3 hits in 80 CRISPR screens"/>
</dbReference>
<dbReference type="CD-CODE" id="CE726F99">
    <property type="entry name" value="Postsynaptic density"/>
</dbReference>
<dbReference type="ChiTaRS" id="Ktn1">
    <property type="organism name" value="mouse"/>
</dbReference>
<dbReference type="PRO" id="PR:Q61595"/>
<dbReference type="Proteomes" id="UP000000589">
    <property type="component" value="Unplaced"/>
</dbReference>
<dbReference type="RNAct" id="Q61595">
    <property type="molecule type" value="protein"/>
</dbReference>
<dbReference type="GO" id="GO:0005783">
    <property type="term" value="C:endoplasmic reticulum"/>
    <property type="evidence" value="ECO:0000314"/>
    <property type="project" value="MGI"/>
</dbReference>
<dbReference type="GO" id="GO:0005789">
    <property type="term" value="C:endoplasmic reticulum membrane"/>
    <property type="evidence" value="ECO:0007669"/>
    <property type="project" value="UniProtKB-SubCell"/>
</dbReference>
<dbReference type="GO" id="GO:0019894">
    <property type="term" value="F:kinesin binding"/>
    <property type="evidence" value="ECO:0000304"/>
    <property type="project" value="MGI"/>
</dbReference>
<dbReference type="GO" id="GO:0007018">
    <property type="term" value="P:microtubule-based movement"/>
    <property type="evidence" value="ECO:0000304"/>
    <property type="project" value="MGI"/>
</dbReference>
<dbReference type="GO" id="GO:0015031">
    <property type="term" value="P:protein transport"/>
    <property type="evidence" value="ECO:0007669"/>
    <property type="project" value="InterPro"/>
</dbReference>
<dbReference type="Gene3D" id="1.10.287.1490">
    <property type="match status" value="1"/>
</dbReference>
<dbReference type="InterPro" id="IPR024854">
    <property type="entry name" value="Kinectin"/>
</dbReference>
<dbReference type="InterPro" id="IPR007794">
    <property type="entry name" value="Rib_rcpt_KP"/>
</dbReference>
<dbReference type="PANTHER" id="PTHR18864">
    <property type="entry name" value="KINECTIN"/>
    <property type="match status" value="1"/>
</dbReference>
<dbReference type="PANTHER" id="PTHR18864:SF1">
    <property type="entry name" value="KINECTIN"/>
    <property type="match status" value="1"/>
</dbReference>
<dbReference type="Pfam" id="PF05104">
    <property type="entry name" value="Rib_recp_KP_reg"/>
    <property type="match status" value="1"/>
</dbReference>
<gene>
    <name evidence="12" type="primary">Ktn1</name>
</gene>
<sequence>MELYESTYFIVLIPSVVITVIFLFFWLFMKETLYDEVLAKQKREQKLISTKTDKKKAEKKKNKKKEIQNGTLRESDSEHVPRDFKLSDASPAEDEQFVPAPLNVAETSSSVRERQKKEKKQKPSLEEQVIKESDASKIPGKKVEPVLVTKQPAPPPPLEAAALKKKAGQKKSKNGSEEQDKKVEMLMAPSKEQDVLLSHQDTKQEGGLGKKKGLSKKQKSENVAVLVDEPLIHATTYMPLDNANSNLMMDKREIIDMIKPDHVEGIQKSGTKKLKIETDKENAEVKFKDFLLSLKTMMFSEDEALCVVDLLKEKSGVIKEALKKSNKGELSGLLHQLQEKERLLSAMKEDAAASKERCKRLTQEMMTEKERSSVVIARMKDRIGTLEKEHNIFQNKMHASYQETQQMQMKFQQVQEQMEAEIAHLKQENGILRDAVSNTTNQLESKQSAELNKLRQDCGRLVSELNEKTGKLQQEGVQKKNAEQAATQLKVQLQEAERRWEEVQSYIRKRTAEHEAAQQDLQSKFVAKENEVQSLHSKLTDTLVSKQQLEQRLMQLMESEQKRASKEESLQIQVQDILEQNEALKAQIQQFHSQIAAQTSASVLAEELHKVIAEKDKQLKQTEDSLANEQDHLASKEEELKDVQNMNFLLKAEVQKWQALANEQAATAHEVEKMQKSIHVKEDEIRLLEEQLQHEVASKMEELKILSEQNKALQSEVRKLQTAVSQQPNKDVVEQMEKCIQEKDEKLRTVEELLETGLIQVATREEELSAIRTENSTLTREVQELKAKQSDQVSFVSLIEDLKRVIHEKDGQIKSVEELLEVELLKVANKEKTVQALKQEIEVLKEEIGNAQLEKAHQLSVTSQVQELQNLLRGKEEQVNSMKAALEDRDRGLTGRGTCAQVCSTPQFEELESVLKEKDNEIKRIEVKLKDTESDVSKMSELLKEVQEENKFLKCQLSHQKHQQASFPSQEELQTVISEKEKEITDLCNELESLKNAVEHQRKKNNDLREKNWEAMEALASTEKMLQDRVNKTSKERRQHVEAIELESKDLLKRLFPTVSVPSNLNYSEWLRGFEKKAKACVAGTSDAEAVKVLEHRLKEASEMHTLLQLECEKYKSVLAETEGILQKLQRSVEQEESKWKIKADESQRMIKQMQSSFTASERELERLRQENKDMENLRREREHLEMELEKAEMERSTYVMEVRELKDLLTELQKKLDDSYSEAVRQNEELNLLKTQLNETHSKLQNEQTERKKVADDLHKAQQSLNSIHSKISLKAAGDTVVIENSDISPEMESPEKETMSVSLNQTVTQLQQLLQEVNQQLTKET</sequence>
<proteinExistence type="evidence at protein level"/>
<name>KTN1_MOUSE</name>
<evidence type="ECO:0000250" key="1"/>
<evidence type="ECO:0000250" key="2">
    <source>
        <dbReference type="UniProtKB" id="Q86UP2"/>
    </source>
</evidence>
<evidence type="ECO:0000255" key="3"/>
<evidence type="ECO:0000256" key="4">
    <source>
        <dbReference type="SAM" id="MobiDB-lite"/>
    </source>
</evidence>
<evidence type="ECO:0000269" key="5">
    <source>
    </source>
</evidence>
<evidence type="ECO:0000269" key="6">
    <source>
    </source>
</evidence>
<evidence type="ECO:0000303" key="7">
    <source>
    </source>
</evidence>
<evidence type="ECO:0000305" key="8"/>
<evidence type="ECO:0000312" key="9">
    <source>
        <dbReference type="EMBL" id="AAB65839.1"/>
    </source>
</evidence>
<evidence type="ECO:0000312" key="10">
    <source>
        <dbReference type="EMBL" id="BAC30538.1"/>
    </source>
</evidence>
<evidence type="ECO:0000312" key="11">
    <source>
        <dbReference type="EMBL" id="CAD56924.1"/>
    </source>
</evidence>
<evidence type="ECO:0000312" key="12">
    <source>
        <dbReference type="MGI" id="MGI:109153"/>
    </source>
</evidence>
<protein>
    <recommendedName>
        <fullName>Kinectin</fullName>
    </recommendedName>
</protein>
<keyword id="KW-0025">Alternative splicing</keyword>
<keyword id="KW-0175">Coiled coil</keyword>
<keyword id="KW-0256">Endoplasmic reticulum</keyword>
<keyword id="KW-0325">Glycoprotein</keyword>
<keyword id="KW-0472">Membrane</keyword>
<keyword id="KW-0597">Phosphoprotein</keyword>
<keyword id="KW-1185">Reference proteome</keyword>
<keyword id="KW-0735">Signal-anchor</keyword>
<keyword id="KW-0812">Transmembrane</keyword>
<keyword id="KW-1133">Transmembrane helix</keyword>
<accession>Q61595</accession>
<accession>Q8BG49</accession>
<accession>Q8BHF4</accession>
<accession>Q8BHM8</accession>
<accession>Q8C9Y5</accession>
<accession>Q8CG51</accession>
<accession>Q8CG52</accession>
<accession>Q8CG53</accession>
<accession>Q8CG54</accession>
<accession>Q8CG55</accession>
<accession>Q8CG56</accession>
<accession>Q8CG57</accession>
<accession>Q8CG58</accession>
<accession>Q8CG59</accession>
<accession>Q8CG60</accession>
<accession>Q8CG61</accession>
<accession>Q8CG62</accession>
<accession>Q8CG63</accession>
<comment type="function">
    <text evidence="2">Receptor for kinesin thus involved in kinesin-driven vesicle motility. Accumulates in integrin-based adhesion complexes (IAC) upon integrin aggregation by fibronectin (By similarity).</text>
</comment>
<comment type="subcellular location">
    <subcellularLocation>
        <location evidence="5">Endoplasmic reticulum membrane</location>
        <topology evidence="5">Single-pass type II membrane protein</topology>
    </subcellularLocation>
    <text evidence="1">Vesicle membrane protein anchored to the endoplasmic reticulum (By similarity). Some isoforms containing the inserts at residues 1007-1035 and 1154-1177 are detected in neurite processes.</text>
</comment>
<comment type="alternative products">
    <event type="alternative splicing"/>
    <isoform>
        <id>Q61595-1</id>
        <name evidence="6">1</name>
        <sequence type="displayed"/>
    </isoform>
    <isoform>
        <id>Q61595-2</id>
        <name evidence="5">2</name>
        <name evidence="5">KNT1</name>
        <sequence type="described" ref="VSP_052042 VSP_052043 VSP_052044 VSP_052045 VSP_052046"/>
    </isoform>
    <isoform>
        <id>Q61595-3</id>
        <name evidence="5">3</name>
        <name evidence="5">KNT2</name>
        <sequence type="described" ref="VSP_052042 VSP_052043 VSP_052044 VSP_052046"/>
    </isoform>
    <isoform>
        <id>Q61595-4</id>
        <name evidence="5">4</name>
        <name evidence="5">KNT3</name>
        <sequence type="described" ref="VSP_052042 VSP_052043 VSP_052045"/>
    </isoform>
    <isoform>
        <id>Q61595-5</id>
        <name evidence="5">5</name>
        <name evidence="5">KNT4</name>
        <sequence type="described" ref="VSP_052043 VSP_052046"/>
    </isoform>
    <isoform>
        <id>Q61595-6</id>
        <name evidence="5">6</name>
        <name evidence="5">KNT5</name>
        <sequence type="described" ref="VSP_052043 VSP_052045 VSP_052046"/>
    </isoform>
    <isoform>
        <id>Q61595-7</id>
        <name evidence="5">7</name>
        <name evidence="5">KNT6</name>
        <sequence type="described" ref="VSP_052042 VSP_052044"/>
    </isoform>
    <isoform>
        <id>Q61595-8</id>
        <name evidence="5">8</name>
        <name evidence="5">KNT7</name>
        <sequence type="described" ref="VSP_052042 VSP_052044 VSP_052045"/>
    </isoform>
    <isoform>
        <id>Q61595-9</id>
        <name evidence="5">9</name>
        <name evidence="5">KNT8</name>
        <sequence type="described" ref="VSP_052044 VSP_052045 VSP_052046"/>
    </isoform>
    <isoform>
        <id>Q61595-10</id>
        <name evidence="5">10</name>
        <name evidence="5">KNT9</name>
        <sequence type="described" ref="VSP_052042 VSP_052043"/>
    </isoform>
    <isoform>
        <id>Q61595-11</id>
        <name evidence="5">11</name>
        <name evidence="5">KNT10</name>
        <sequence type="described" ref="VSP_052042"/>
    </isoform>
    <isoform>
        <id>Q61595-12</id>
        <name evidence="5">12</name>
        <name evidence="5">KNT11</name>
        <sequence type="described" ref="VSP_052042 VSP_052043 VSP_052044 VSP_052045"/>
    </isoform>
    <isoform>
        <id>Q61595-13</id>
        <name evidence="5">13</name>
        <name evidence="5">KNT12</name>
        <sequence type="described" ref="VSP_052042 VSP_052045 VSP_052046"/>
    </isoform>
    <isoform>
        <id>Q61595-14</id>
        <name evidence="5">14</name>
        <name evidence="5">KNT13</name>
        <sequence type="described" ref="VSP_052042 VSP_052044 VSP_052045 VSP_052046"/>
    </isoform>
    <isoform>
        <id>Q61595-15</id>
        <name evidence="5">15</name>
        <name evidence="5">KNT14</name>
        <sequence type="described" ref="VSP_052044 VSP_052045"/>
    </isoform>
    <isoform>
        <id>Q61595-16</id>
        <name evidence="5">16</name>
        <name evidence="5">KNT15</name>
        <sequence type="described" ref="VSP_052042 VSP_052043 VSP_052045 VSP_052046"/>
    </isoform>
</comment>
<comment type="tissue specificity">
    <text evidence="6">Expressed in all tissues examined including 12-day embryo, adult heart, brain, ovary, kidney, lung, small intestine, spleen, thymus and pancreas.</text>
</comment>
<comment type="developmental stage">
    <text evidence="5">Isoform 6, isoform 7 and isoform 8 are detected in embryonic hippocampus but not in later developmental stages. Isoform 14, isoform 15 and isoform 16 are adult-specific.</text>
</comment>
<comment type="similarity">
    <text evidence="3">Belongs to the kinectin family.</text>
</comment>
<organism>
    <name type="scientific">Mus musculus</name>
    <name type="common">Mouse</name>
    <dbReference type="NCBI Taxonomy" id="10090"/>
    <lineage>
        <taxon>Eukaryota</taxon>
        <taxon>Metazoa</taxon>
        <taxon>Chordata</taxon>
        <taxon>Craniata</taxon>
        <taxon>Vertebrata</taxon>
        <taxon>Euteleostomi</taxon>
        <taxon>Mammalia</taxon>
        <taxon>Eutheria</taxon>
        <taxon>Euarchontoglires</taxon>
        <taxon>Glires</taxon>
        <taxon>Rodentia</taxon>
        <taxon>Myomorpha</taxon>
        <taxon>Muroidea</taxon>
        <taxon>Muridae</taxon>
        <taxon>Murinae</taxon>
        <taxon>Mus</taxon>
        <taxon>Mus</taxon>
    </lineage>
</organism>
<reference evidence="8 9" key="1">
    <citation type="journal article" date="1996" name="Immunol. Cell Biol.">
        <title>Cloning of novel kinectin splice variants with alternative C-termini: structure, distribution and evolution of mouse kinectin.</title>
        <authorList>
            <person name="Leung E."/>
            <person name="Print C.G."/>
            <person name="Parry D.A.D."/>
            <person name="Closey D.N."/>
            <person name="Lockhart P.J."/>
            <person name="Skinner S.J.M."/>
            <person name="Batchelor D.C."/>
            <person name="Krissansen G.W."/>
        </authorList>
    </citation>
    <scope>NUCLEOTIDE SEQUENCE [MRNA] (ISOFORM 1)</scope>
    <scope>ALTERNATIVE SPLICING</scope>
    <scope>TISSUE SPECIFICITY</scope>
</reference>
<reference evidence="8 10" key="2">
    <citation type="journal article" date="2005" name="Science">
        <title>The transcriptional landscape of the mammalian genome.</title>
        <authorList>
            <person name="Carninci P."/>
            <person name="Kasukawa T."/>
            <person name="Katayama S."/>
            <person name="Gough J."/>
            <person name="Frith M.C."/>
            <person name="Maeda N."/>
            <person name="Oyama R."/>
            <person name="Ravasi T."/>
            <person name="Lenhard B."/>
            <person name="Wells C."/>
            <person name="Kodzius R."/>
            <person name="Shimokawa K."/>
            <person name="Bajic V.B."/>
            <person name="Brenner S.E."/>
            <person name="Batalov S."/>
            <person name="Forrest A.R."/>
            <person name="Zavolan M."/>
            <person name="Davis M.J."/>
            <person name="Wilming L.G."/>
            <person name="Aidinis V."/>
            <person name="Allen J.E."/>
            <person name="Ambesi-Impiombato A."/>
            <person name="Apweiler R."/>
            <person name="Aturaliya R.N."/>
            <person name="Bailey T.L."/>
            <person name="Bansal M."/>
            <person name="Baxter L."/>
            <person name="Beisel K.W."/>
            <person name="Bersano T."/>
            <person name="Bono H."/>
            <person name="Chalk A.M."/>
            <person name="Chiu K.P."/>
            <person name="Choudhary V."/>
            <person name="Christoffels A."/>
            <person name="Clutterbuck D.R."/>
            <person name="Crowe M.L."/>
            <person name="Dalla E."/>
            <person name="Dalrymple B.P."/>
            <person name="de Bono B."/>
            <person name="Della Gatta G."/>
            <person name="di Bernardo D."/>
            <person name="Down T."/>
            <person name="Engstrom P."/>
            <person name="Fagiolini M."/>
            <person name="Faulkner G."/>
            <person name="Fletcher C.F."/>
            <person name="Fukushima T."/>
            <person name="Furuno M."/>
            <person name="Futaki S."/>
            <person name="Gariboldi M."/>
            <person name="Georgii-Hemming P."/>
            <person name="Gingeras T.R."/>
            <person name="Gojobori T."/>
            <person name="Green R.E."/>
            <person name="Gustincich S."/>
            <person name="Harbers M."/>
            <person name="Hayashi Y."/>
            <person name="Hensch T.K."/>
            <person name="Hirokawa N."/>
            <person name="Hill D."/>
            <person name="Huminiecki L."/>
            <person name="Iacono M."/>
            <person name="Ikeo K."/>
            <person name="Iwama A."/>
            <person name="Ishikawa T."/>
            <person name="Jakt M."/>
            <person name="Kanapin A."/>
            <person name="Katoh M."/>
            <person name="Kawasawa Y."/>
            <person name="Kelso J."/>
            <person name="Kitamura H."/>
            <person name="Kitano H."/>
            <person name="Kollias G."/>
            <person name="Krishnan S.P."/>
            <person name="Kruger A."/>
            <person name="Kummerfeld S.K."/>
            <person name="Kurochkin I.V."/>
            <person name="Lareau L.F."/>
            <person name="Lazarevic D."/>
            <person name="Lipovich L."/>
            <person name="Liu J."/>
            <person name="Liuni S."/>
            <person name="McWilliam S."/>
            <person name="Madan Babu M."/>
            <person name="Madera M."/>
            <person name="Marchionni L."/>
            <person name="Matsuda H."/>
            <person name="Matsuzawa S."/>
            <person name="Miki H."/>
            <person name="Mignone F."/>
            <person name="Miyake S."/>
            <person name="Morris K."/>
            <person name="Mottagui-Tabar S."/>
            <person name="Mulder N."/>
            <person name="Nakano N."/>
            <person name="Nakauchi H."/>
            <person name="Ng P."/>
            <person name="Nilsson R."/>
            <person name="Nishiguchi S."/>
            <person name="Nishikawa S."/>
            <person name="Nori F."/>
            <person name="Ohara O."/>
            <person name="Okazaki Y."/>
            <person name="Orlando V."/>
            <person name="Pang K.C."/>
            <person name="Pavan W.J."/>
            <person name="Pavesi G."/>
            <person name="Pesole G."/>
            <person name="Petrovsky N."/>
            <person name="Piazza S."/>
            <person name="Reed J."/>
            <person name="Reid J.F."/>
            <person name="Ring B.Z."/>
            <person name="Ringwald M."/>
            <person name="Rost B."/>
            <person name="Ruan Y."/>
            <person name="Salzberg S.L."/>
            <person name="Sandelin A."/>
            <person name="Schneider C."/>
            <person name="Schoenbach C."/>
            <person name="Sekiguchi K."/>
            <person name="Semple C.A."/>
            <person name="Seno S."/>
            <person name="Sessa L."/>
            <person name="Sheng Y."/>
            <person name="Shibata Y."/>
            <person name="Shimada H."/>
            <person name="Shimada K."/>
            <person name="Silva D."/>
            <person name="Sinclair B."/>
            <person name="Sperling S."/>
            <person name="Stupka E."/>
            <person name="Sugiura K."/>
            <person name="Sultana R."/>
            <person name="Takenaka Y."/>
            <person name="Taki K."/>
            <person name="Tammoja K."/>
            <person name="Tan S.L."/>
            <person name="Tang S."/>
            <person name="Taylor M.S."/>
            <person name="Tegner J."/>
            <person name="Teichmann S.A."/>
            <person name="Ueda H.R."/>
            <person name="van Nimwegen E."/>
            <person name="Verardo R."/>
            <person name="Wei C.L."/>
            <person name="Yagi K."/>
            <person name="Yamanishi H."/>
            <person name="Zabarovsky E."/>
            <person name="Zhu S."/>
            <person name="Zimmer A."/>
            <person name="Hide W."/>
            <person name="Bult C."/>
            <person name="Grimmond S.M."/>
            <person name="Teasdale R.D."/>
            <person name="Liu E.T."/>
            <person name="Brusic V."/>
            <person name="Quackenbush J."/>
            <person name="Wahlestedt C."/>
            <person name="Mattick J.S."/>
            <person name="Hume D.A."/>
            <person name="Kai C."/>
            <person name="Sasaki D."/>
            <person name="Tomaru Y."/>
            <person name="Fukuda S."/>
            <person name="Kanamori-Katayama M."/>
            <person name="Suzuki M."/>
            <person name="Aoki J."/>
            <person name="Arakawa T."/>
            <person name="Iida J."/>
            <person name="Imamura K."/>
            <person name="Itoh M."/>
            <person name="Kato T."/>
            <person name="Kawaji H."/>
            <person name="Kawagashira N."/>
            <person name="Kawashima T."/>
            <person name="Kojima M."/>
            <person name="Kondo S."/>
            <person name="Konno H."/>
            <person name="Nakano K."/>
            <person name="Ninomiya N."/>
            <person name="Nishio T."/>
            <person name="Okada M."/>
            <person name="Plessy C."/>
            <person name="Shibata K."/>
            <person name="Shiraki T."/>
            <person name="Suzuki S."/>
            <person name="Tagami M."/>
            <person name="Waki K."/>
            <person name="Watahiki A."/>
            <person name="Okamura-Oho Y."/>
            <person name="Suzuki H."/>
            <person name="Kawai J."/>
            <person name="Hayashizaki Y."/>
        </authorList>
    </citation>
    <scope>NUCLEOTIDE SEQUENCE [LARGE SCALE MRNA] OF 1-527</scope>
    <source>
        <strain evidence="10">C57BL/6J</strain>
        <tissue evidence="10">Thymus</tissue>
    </source>
</reference>
<reference evidence="11" key="3">
    <citation type="journal article" date="2004" name="J. Cell Sci.">
        <title>Distribution and functions of kinectin isoforms.</title>
        <authorList>
            <person name="Santama N."/>
            <person name="Er C.P.N."/>
            <person name="Ong L.-L."/>
            <person name="Yu H."/>
        </authorList>
    </citation>
    <scope>NUCLEOTIDE SEQUENCE [MRNA] OF 803-1327 (ISOFORMS 2; 3; 4; 5; 6; 7; 8; 9; 10; 11; 12; 13; 14; 15 AND 16)</scope>
    <scope>SUBCELLULAR LOCATION</scope>
    <scope>DEVELOPMENTAL STAGE</scope>
    <source>
        <strain evidence="5">Swiss Webster</strain>
        <tissue evidence="5">Astrocyte</tissue>
        <tissue evidence="5">Hippocampus</tissue>
    </source>
</reference>
<reference key="4">
    <citation type="journal article" date="2010" name="Cell">
        <title>A tissue-specific atlas of mouse protein phosphorylation and expression.</title>
        <authorList>
            <person name="Huttlin E.L."/>
            <person name="Jedrychowski M.P."/>
            <person name="Elias J.E."/>
            <person name="Goswami T."/>
            <person name="Rad R."/>
            <person name="Beausoleil S.A."/>
            <person name="Villen J."/>
            <person name="Haas W."/>
            <person name="Sowa M.E."/>
            <person name="Gygi S.P."/>
        </authorList>
    </citation>
    <scope>IDENTIFICATION BY MASS SPECTROMETRY [LARGE SCALE ANALYSIS]</scope>
    <source>
        <tissue>Brain</tissue>
        <tissue>Brown adipose tissue</tissue>
        <tissue>Heart</tissue>
        <tissue>Kidney</tissue>
        <tissue>Liver</tissue>
        <tissue>Lung</tissue>
        <tissue>Pancreas</tissue>
        <tissue>Spleen</tissue>
        <tissue>Testis</tissue>
    </source>
</reference>